<comment type="function">
    <text evidence="1 3">May catalyze the cis-trans isomerization of proline imidic peptide bonds in oligopeptides thereby assisting the folding of proteins. May also function as a chaperone, playing a role in intracellular transport of proteins. May also have a protein ubiquitin ligase activity acting as an E3 ubiquitin protein ligase or as a ubiquitin-ubiquitin ligase promoting elongation of ubiquitin chains on proteins.</text>
</comment>
<comment type="catalytic activity">
    <reaction>
        <text>[protein]-peptidylproline (omega=180) = [protein]-peptidylproline (omega=0)</text>
        <dbReference type="Rhea" id="RHEA:16237"/>
        <dbReference type="Rhea" id="RHEA-COMP:10747"/>
        <dbReference type="Rhea" id="RHEA-COMP:10748"/>
        <dbReference type="ChEBI" id="CHEBI:83833"/>
        <dbReference type="ChEBI" id="CHEBI:83834"/>
        <dbReference type="EC" id="5.2.1.8"/>
    </reaction>
</comment>
<comment type="catalytic activity">
    <reaction evidence="3">
        <text>S-ubiquitinyl-[E2 ubiquitin-conjugating enzyme]-L-cysteine + [acceptor protein]-L-lysine = [E2 ubiquitin-conjugating enzyme]-L-cysteine + N(6)-ubiquitinyl-[acceptor protein]-L-lysine.</text>
        <dbReference type="EC" id="2.3.2.27"/>
    </reaction>
</comment>
<comment type="pathway">
    <text evidence="3">Protein modification; protein ubiquitination.</text>
</comment>
<comment type="subcellular location">
    <subcellularLocation>
        <location evidence="2 3">Nucleus</location>
    </subcellularLocation>
</comment>
<comment type="similarity">
    <text evidence="6">Belongs to the cyclophilin-type PPIase family. PPIL2 subfamily.</text>
</comment>
<comment type="sequence caution" evidence="6">
    <conflict type="erroneous gene model prediction">
        <sequence resource="EMBL-CDS" id="ESU11358"/>
    </conflict>
</comment>
<dbReference type="EC" id="2.3.2.27" evidence="3"/>
<dbReference type="EC" id="5.2.1.8" evidence="1"/>
<dbReference type="EMBL" id="DS231665">
    <property type="protein sequence ID" value="ESU11358.1"/>
    <property type="status" value="ALT_SEQ"/>
    <property type="molecule type" value="Genomic_DNA"/>
</dbReference>
<dbReference type="EMBL" id="HG970334">
    <property type="protein sequence ID" value="CEF87398.1"/>
    <property type="molecule type" value="Genomic_DNA"/>
</dbReference>
<dbReference type="RefSeq" id="XP_011323934.1">
    <property type="nucleotide sequence ID" value="XM_011325632.1"/>
</dbReference>
<dbReference type="SMR" id="Q4IBK5"/>
<dbReference type="STRING" id="229533.Q4IBK5"/>
<dbReference type="GeneID" id="23552587"/>
<dbReference type="KEGG" id="fgr:FGSG_05403"/>
<dbReference type="VEuPathDB" id="FungiDB:FGRAMPH1_01G17827"/>
<dbReference type="eggNOG" id="KOG0883">
    <property type="taxonomic scope" value="Eukaryota"/>
</dbReference>
<dbReference type="HOGENOM" id="CLU_012062_7_0_1"/>
<dbReference type="InParanoid" id="Q4IBK5"/>
<dbReference type="OrthoDB" id="84861at110618"/>
<dbReference type="UniPathway" id="UPA00143"/>
<dbReference type="Proteomes" id="UP000070720">
    <property type="component" value="Chromosome 3"/>
</dbReference>
<dbReference type="GO" id="GO:0071013">
    <property type="term" value="C:catalytic step 2 spliceosome"/>
    <property type="evidence" value="ECO:0007669"/>
    <property type="project" value="TreeGrafter"/>
</dbReference>
<dbReference type="GO" id="GO:0003755">
    <property type="term" value="F:peptidyl-prolyl cis-trans isomerase activity"/>
    <property type="evidence" value="ECO:0007669"/>
    <property type="project" value="UniProtKB-KW"/>
</dbReference>
<dbReference type="GO" id="GO:0061630">
    <property type="term" value="F:ubiquitin protein ligase activity"/>
    <property type="evidence" value="ECO:0007669"/>
    <property type="project" value="TreeGrafter"/>
</dbReference>
<dbReference type="GO" id="GO:0006457">
    <property type="term" value="P:protein folding"/>
    <property type="evidence" value="ECO:0007669"/>
    <property type="project" value="InterPro"/>
</dbReference>
<dbReference type="GO" id="GO:0000209">
    <property type="term" value="P:protein polyubiquitination"/>
    <property type="evidence" value="ECO:0007669"/>
    <property type="project" value="TreeGrafter"/>
</dbReference>
<dbReference type="CDD" id="cd01923">
    <property type="entry name" value="cyclophilin_RING"/>
    <property type="match status" value="1"/>
</dbReference>
<dbReference type="CDD" id="cd16663">
    <property type="entry name" value="RING-Ubox_PPIL2"/>
    <property type="match status" value="1"/>
</dbReference>
<dbReference type="FunFam" id="3.30.40.10:FF:000079">
    <property type="entry name" value="Peptidyl-prolyl cis-trans isomerase 2"/>
    <property type="match status" value="1"/>
</dbReference>
<dbReference type="FunFam" id="2.40.100.10:FF:000014">
    <property type="entry name" value="Peptidyl-prolyl cis-trans isomerase cyp65"/>
    <property type="match status" value="1"/>
</dbReference>
<dbReference type="Gene3D" id="2.40.100.10">
    <property type="entry name" value="Cyclophilin-like"/>
    <property type="match status" value="1"/>
</dbReference>
<dbReference type="Gene3D" id="3.30.40.10">
    <property type="entry name" value="Zinc/RING finger domain, C3HC4 (zinc finger)"/>
    <property type="match status" value="1"/>
</dbReference>
<dbReference type="InterPro" id="IPR029000">
    <property type="entry name" value="Cyclophilin-like_dom_sf"/>
</dbReference>
<dbReference type="InterPro" id="IPR020892">
    <property type="entry name" value="Cyclophilin-type_PPIase_CS"/>
</dbReference>
<dbReference type="InterPro" id="IPR002130">
    <property type="entry name" value="Cyclophilin-type_PPIase_dom"/>
</dbReference>
<dbReference type="InterPro" id="IPR044666">
    <property type="entry name" value="Cyclophilin_A-like"/>
</dbReference>
<dbReference type="InterPro" id="IPR026951">
    <property type="entry name" value="PPIL2_U-box_dom"/>
</dbReference>
<dbReference type="InterPro" id="IPR003613">
    <property type="entry name" value="Ubox_domain"/>
</dbReference>
<dbReference type="InterPro" id="IPR013083">
    <property type="entry name" value="Znf_RING/FYVE/PHD"/>
</dbReference>
<dbReference type="PANTHER" id="PTHR45625">
    <property type="entry name" value="PEPTIDYL-PROLYL CIS-TRANS ISOMERASE-RELATED"/>
    <property type="match status" value="1"/>
</dbReference>
<dbReference type="PANTHER" id="PTHR45625:SF1">
    <property type="entry name" value="RING-TYPE E3 UBIQUITIN-PROTEIN LIGASE PPIL2"/>
    <property type="match status" value="1"/>
</dbReference>
<dbReference type="Pfam" id="PF00160">
    <property type="entry name" value="Pro_isomerase"/>
    <property type="match status" value="1"/>
</dbReference>
<dbReference type="PRINTS" id="PR00153">
    <property type="entry name" value="CSAPPISMRASE"/>
</dbReference>
<dbReference type="SMART" id="SM00504">
    <property type="entry name" value="Ubox"/>
    <property type="match status" value="1"/>
</dbReference>
<dbReference type="SUPFAM" id="SSF50891">
    <property type="entry name" value="Cyclophilin-like"/>
    <property type="match status" value="1"/>
</dbReference>
<dbReference type="SUPFAM" id="SSF57850">
    <property type="entry name" value="RING/U-box"/>
    <property type="match status" value="1"/>
</dbReference>
<dbReference type="PROSITE" id="PS00170">
    <property type="entry name" value="CSA_PPIASE_1"/>
    <property type="match status" value="1"/>
</dbReference>
<dbReference type="PROSITE" id="PS50072">
    <property type="entry name" value="CSA_PPIASE_2"/>
    <property type="match status" value="1"/>
</dbReference>
<dbReference type="PROSITE" id="PS51698">
    <property type="entry name" value="U_BOX"/>
    <property type="match status" value="1"/>
</dbReference>
<name>PPIL2_GIBZE</name>
<reference key="1">
    <citation type="journal article" date="2007" name="Science">
        <title>The Fusarium graminearum genome reveals a link between localized polymorphism and pathogen specialization.</title>
        <authorList>
            <person name="Cuomo C.A."/>
            <person name="Gueldener U."/>
            <person name="Xu J.-R."/>
            <person name="Trail F."/>
            <person name="Turgeon B.G."/>
            <person name="Di Pietro A."/>
            <person name="Walton J.D."/>
            <person name="Ma L.-J."/>
            <person name="Baker S.E."/>
            <person name="Rep M."/>
            <person name="Adam G."/>
            <person name="Antoniw J."/>
            <person name="Baldwin T."/>
            <person name="Calvo S.E."/>
            <person name="Chang Y.-L."/>
            <person name="DeCaprio D."/>
            <person name="Gale L.R."/>
            <person name="Gnerre S."/>
            <person name="Goswami R.S."/>
            <person name="Hammond-Kosack K."/>
            <person name="Harris L.J."/>
            <person name="Hilburn K."/>
            <person name="Kennell J.C."/>
            <person name="Kroken S."/>
            <person name="Magnuson J.K."/>
            <person name="Mannhaupt G."/>
            <person name="Mauceli E.W."/>
            <person name="Mewes H.-W."/>
            <person name="Mitterbauer R."/>
            <person name="Muehlbauer G."/>
            <person name="Muensterkoetter M."/>
            <person name="Nelson D."/>
            <person name="O'Donnell K."/>
            <person name="Ouellet T."/>
            <person name="Qi W."/>
            <person name="Quesneville H."/>
            <person name="Roncero M.I.G."/>
            <person name="Seong K.-Y."/>
            <person name="Tetko I.V."/>
            <person name="Urban M."/>
            <person name="Waalwijk C."/>
            <person name="Ward T.J."/>
            <person name="Yao J."/>
            <person name="Birren B.W."/>
            <person name="Kistler H.C."/>
        </authorList>
    </citation>
    <scope>NUCLEOTIDE SEQUENCE [LARGE SCALE GENOMIC DNA]</scope>
    <source>
        <strain>ATCC MYA-4620 / CBS 123657 / FGSC 9075 / NRRL 31084 / PH-1</strain>
    </source>
</reference>
<reference key="2">
    <citation type="journal article" date="2010" name="Nature">
        <title>Comparative genomics reveals mobile pathogenicity chromosomes in Fusarium.</title>
        <authorList>
            <person name="Ma L.-J."/>
            <person name="van der Does H.C."/>
            <person name="Borkovich K.A."/>
            <person name="Coleman J.J."/>
            <person name="Daboussi M.-J."/>
            <person name="Di Pietro A."/>
            <person name="Dufresne M."/>
            <person name="Freitag M."/>
            <person name="Grabherr M."/>
            <person name="Henrissat B."/>
            <person name="Houterman P.M."/>
            <person name="Kang S."/>
            <person name="Shim W.-B."/>
            <person name="Woloshuk C."/>
            <person name="Xie X."/>
            <person name="Xu J.-R."/>
            <person name="Antoniw J."/>
            <person name="Baker S.E."/>
            <person name="Bluhm B.H."/>
            <person name="Breakspear A."/>
            <person name="Brown D.W."/>
            <person name="Butchko R.A.E."/>
            <person name="Chapman S."/>
            <person name="Coulson R."/>
            <person name="Coutinho P.M."/>
            <person name="Danchin E.G.J."/>
            <person name="Diener A."/>
            <person name="Gale L.R."/>
            <person name="Gardiner D.M."/>
            <person name="Goff S."/>
            <person name="Hammond-Kosack K.E."/>
            <person name="Hilburn K."/>
            <person name="Hua-Van A."/>
            <person name="Jonkers W."/>
            <person name="Kazan K."/>
            <person name="Kodira C.D."/>
            <person name="Koehrsen M."/>
            <person name="Kumar L."/>
            <person name="Lee Y.-H."/>
            <person name="Li L."/>
            <person name="Manners J.M."/>
            <person name="Miranda-Saavedra D."/>
            <person name="Mukherjee M."/>
            <person name="Park G."/>
            <person name="Park J."/>
            <person name="Park S.-Y."/>
            <person name="Proctor R.H."/>
            <person name="Regev A."/>
            <person name="Ruiz-Roldan M.C."/>
            <person name="Sain D."/>
            <person name="Sakthikumar S."/>
            <person name="Sykes S."/>
            <person name="Schwartz D.C."/>
            <person name="Turgeon B.G."/>
            <person name="Wapinski I."/>
            <person name="Yoder O."/>
            <person name="Young S."/>
            <person name="Zeng Q."/>
            <person name="Zhou S."/>
            <person name="Galagan J."/>
            <person name="Cuomo C.A."/>
            <person name="Kistler H.C."/>
            <person name="Rep M."/>
        </authorList>
    </citation>
    <scope>GENOME REANNOTATION</scope>
    <source>
        <strain>ATCC MYA-4620 / CBS 123657 / FGSC 9075 / NRRL 31084 / PH-1</strain>
    </source>
</reference>
<reference key="3">
    <citation type="journal article" date="2015" name="BMC Genomics">
        <title>The completed genome sequence of the pathogenic ascomycete fungus Fusarium graminearum.</title>
        <authorList>
            <person name="King R."/>
            <person name="Urban M."/>
            <person name="Hammond-Kosack M.C.U."/>
            <person name="Hassani-Pak K."/>
            <person name="Hammond-Kosack K.E."/>
        </authorList>
    </citation>
    <scope>NUCLEOTIDE SEQUENCE [LARGE SCALE GENOMIC DNA]</scope>
    <source>
        <strain>ATCC MYA-4620 / CBS 123657 / FGSC 9075 / NRRL 31084 / PH-1</strain>
    </source>
</reference>
<sequence>MGKGTDKLYITHSEWSSADAFSPSIGAGASRNQQATASFRRLPFNFCAASLQPFKNPVCTPDGTIFDVEVIGVWLEKHPNQNPVTGEPLQKKDLIRLNFARNSESDSLGAGLSDGKGDLIDPVTYKVFTDNTHIVAIRHGTYANVFAWDTVDRMNIKAKSWRDLVDDEEFTRADIITLQDPQNAASRDLNQFKFLKEGHEAQLTKEQEEERNAGNINAGALGSMGEKVSRAKAAVEKARKAREQGGDVNRSSTALTKPTGAGTVVRQSMINDKKLAVNSATYTTGKAAASFTSTGLTPETSGERALLSDEEYMLKPKRVKATGFARMETNMGDLTIELYPEFAPKAVWNFIKLSQTGYYKGVAFHRNIPNFMIQGGDPSGSGRGGQSVWGKYFDDEFDGPMTHNGRGTLSMANKGKNTNSSQFFFAYKPTPHLDRKHTVFGKVVENINVLSKMENVPTDGSNRPLNKILIKDIVILLDPFAEFQKQKQANELQTKEREKIRLQGGTDDDKTTWTGKRIRSDGSMENTGAGESVGKYLKTTTQQSTPTVNEADLEDVDTWEEPVRKKAKGGGFGNFDNW</sequence>
<gene>
    <name type="primary">CYP8</name>
    <name type="ORF">FGRRES_17668</name>
    <name type="ORF">FGSG_05403</name>
</gene>
<protein>
    <recommendedName>
        <fullName evidence="6">Peptidyl-prolyl cis-trans isomerase-like 2</fullName>
        <shortName>PPIase</shortName>
        <ecNumber evidence="3">2.3.2.27</ecNumber>
        <ecNumber evidence="1">5.2.1.8</ecNumber>
    </recommendedName>
    <alternativeName>
        <fullName>Cyclophilin-60</fullName>
    </alternativeName>
    <alternativeName>
        <fullName>Cyclophilin-like protein Cyp-60</fullName>
    </alternativeName>
    <alternativeName>
        <fullName evidence="6">RING-type E3 ubiquitin transferase isomerase-like 2</fullName>
    </alternativeName>
    <alternativeName>
        <fullName>Rotamase</fullName>
    </alternativeName>
</protein>
<feature type="chain" id="PRO_0000232986" description="Peptidyl-prolyl cis-trans isomerase-like 2">
    <location>
        <begin position="1"/>
        <end position="578"/>
    </location>
</feature>
<feature type="domain" description="U-box">
    <location>
        <begin position="40"/>
        <end position="114"/>
    </location>
</feature>
<feature type="domain" description="PPIase cyclophilin-type" evidence="4">
    <location>
        <begin position="321"/>
        <end position="475"/>
    </location>
</feature>
<feature type="region of interest" description="Disordered" evidence="5">
    <location>
        <begin position="240"/>
        <end position="260"/>
    </location>
</feature>
<feature type="region of interest" description="Disordered" evidence="5">
    <location>
        <begin position="505"/>
        <end position="578"/>
    </location>
</feature>
<feature type="compositionally biased region" description="Polar residues" evidence="5">
    <location>
        <begin position="538"/>
        <end position="548"/>
    </location>
</feature>
<feature type="compositionally biased region" description="Acidic residues" evidence="5">
    <location>
        <begin position="551"/>
        <end position="560"/>
    </location>
</feature>
<feature type="compositionally biased region" description="Gly residues" evidence="5">
    <location>
        <begin position="569"/>
        <end position="578"/>
    </location>
</feature>
<proteinExistence type="inferred from homology"/>
<accession>Q4IBK5</accession>
<accession>A0A0E0SLT5</accession>
<accession>V6R9P8</accession>
<keyword id="KW-0413">Isomerase</keyword>
<keyword id="KW-0539">Nucleus</keyword>
<keyword id="KW-1185">Reference proteome</keyword>
<keyword id="KW-0697">Rotamase</keyword>
<keyword id="KW-0808">Transferase</keyword>
<keyword id="KW-0833">Ubl conjugation pathway</keyword>
<organism>
    <name type="scientific">Gibberella zeae (strain ATCC MYA-4620 / CBS 123657 / FGSC 9075 / NRRL 31084 / PH-1)</name>
    <name type="common">Wheat head blight fungus</name>
    <name type="synonym">Fusarium graminearum</name>
    <dbReference type="NCBI Taxonomy" id="229533"/>
    <lineage>
        <taxon>Eukaryota</taxon>
        <taxon>Fungi</taxon>
        <taxon>Dikarya</taxon>
        <taxon>Ascomycota</taxon>
        <taxon>Pezizomycotina</taxon>
        <taxon>Sordariomycetes</taxon>
        <taxon>Hypocreomycetidae</taxon>
        <taxon>Hypocreales</taxon>
        <taxon>Nectriaceae</taxon>
        <taxon>Fusarium</taxon>
    </lineage>
</organism>
<evidence type="ECO:0000250" key="1">
    <source>
        <dbReference type="UniProtKB" id="Q08752"/>
    </source>
</evidence>
<evidence type="ECO:0000250" key="2">
    <source>
        <dbReference type="UniProtKB" id="Q09928"/>
    </source>
</evidence>
<evidence type="ECO:0000250" key="3">
    <source>
        <dbReference type="UniProtKB" id="Q13356"/>
    </source>
</evidence>
<evidence type="ECO:0000255" key="4">
    <source>
        <dbReference type="PROSITE-ProRule" id="PRU00156"/>
    </source>
</evidence>
<evidence type="ECO:0000256" key="5">
    <source>
        <dbReference type="SAM" id="MobiDB-lite"/>
    </source>
</evidence>
<evidence type="ECO:0000305" key="6"/>